<proteinExistence type="evidence at protein level"/>
<name>CIAD_CAMJE</name>
<organism>
    <name type="scientific">Campylobacter jejuni subsp. jejuni serotype O:2 (strain ATCC 700819 / NCTC 11168)</name>
    <dbReference type="NCBI Taxonomy" id="192222"/>
    <lineage>
        <taxon>Bacteria</taxon>
        <taxon>Pseudomonadati</taxon>
        <taxon>Campylobacterota</taxon>
        <taxon>Epsilonproteobacteria</taxon>
        <taxon>Campylobacterales</taxon>
        <taxon>Campylobacteraceae</taxon>
        <taxon>Campylobacter</taxon>
    </lineage>
</organism>
<keyword id="KW-0002">3D-structure</keyword>
<keyword id="KW-1035">Host cytoplasm</keyword>
<keyword id="KW-1185">Reference proteome</keyword>
<keyword id="KW-0964">Secreted</keyword>
<keyword id="KW-0843">Virulence</keyword>
<gene>
    <name evidence="4" type="primary">ciaD</name>
    <name evidence="6" type="ordered locus">Cj0788</name>
</gene>
<sequence length="163" mass="19381">MNLEDLAKKTISEVSSIMEEQRRQNEILKEQELNRKTEIKDELPPMEFVCEELDTPQDLEDKISMAKFEEEQKIQNNIEISTQENKEFKKEEPFLQNEILNPSVMTEVQTLNEDIFLKHLRERILVLFEGLNSIKKDDLENRLNLTINFLEFLLANIEDKLKK</sequence>
<comment type="function">
    <text evidence="1 2 3">Effector protein required for the development of acute disease and colon inflammatory lesions (PubMed:24144181). Required for maximal host cell invasion and maximal secretion of the inflammatory chemokine interleukin-8 (IL-8) from host cells (PubMed:24144181). Acts by activating the host MAP kinase signaling pathways ERK-1/2 and p38 to promote both cellular invasion and the release of IL-8 (PubMed:24144181). CiaD mediated activation of ERK-1/2 leads to the phosphorylation of host cortactin (CTTN) on serine residues and association of cortactin with N-WASP, promoting actin cytoskeleton rearrangement, membrane ruffling and host cell invasion (PubMed:24188565). In addition, maximal host cell invasion requires interaction with the host cell protein IQGAP1, a Ras GTPase-activating-like protein (PubMed:33637714). Binding to IQGAP1 facilitates the activation of the Rho GTPases RAC1 and CDC42, further promoting actin reorganization and bacterial uptake (PubMed:33637714). CiaD promotes RAC1 activation by excluding RACGAP1 from the IQGAP1 complex, preventing the deactivation of RAC1 (PubMed:33637714). CiaD probably activates ERK signaling upstream or independently of IQGAP1 (PubMed:33637714).</text>
</comment>
<comment type="subunit">
    <text evidence="3">Interacts with the host cell protein IQGAP1, thus displacing RACGAP1 from the IQGAP1 complex.</text>
</comment>
<comment type="subcellular location">
    <subcellularLocation>
        <location evidence="1 3">Secreted</location>
    </subcellularLocation>
    <subcellularLocation>
        <location evidence="1 3">Host cytoplasm</location>
        <location evidence="1 3">Host cytosol</location>
    </subcellularLocation>
    <text evidence="1">Secreted via the bifunctional flagellar export apparatus, which can secrete virulence proteins in addition to structural components of the flagella (PubMed:24144181). Delivered to the cytosol of human epithelial cells (PubMed:24144181).</text>
</comment>
<comment type="domain">
    <text evidence="1 3">The Mitogen-activated protein (MAP) kinase-docking motif (MKD) is necessary for cellular invasion and IL-8 secretion (PubMed:24144181). Interaction with IQGAP1 is independent of the MKD motif (PubMed:33637714).</text>
</comment>
<comment type="disruption phenotype">
    <text evidence="1 2">Deletion mutant is motile and binds to host cells (PubMed:24144181). It shows a reduction in host cell invasion, induces significantly less IL-8 than the wild-type and has reduced MAP kinase signaling (PubMed:24144181, PubMed:24188565). Mutant is also deficient in maximal phosphorylation of cortactin at the ERK-1/2 phosphorylation sites and in stimulating membrane ruffling (PubMed:24188565). Mutant exhibits reduced virulence in a mouse model of campylobacteriosis (PubMed:24144181).</text>
</comment>
<accession>Q0PAA2</accession>
<reference key="1">
    <citation type="journal article" date="2000" name="Nature">
        <title>The genome sequence of the food-borne pathogen Campylobacter jejuni reveals hypervariable sequences.</title>
        <authorList>
            <person name="Parkhill J."/>
            <person name="Wren B.W."/>
            <person name="Mungall K.L."/>
            <person name="Ketley J.M."/>
            <person name="Churcher C.M."/>
            <person name="Basham D."/>
            <person name="Chillingworth T."/>
            <person name="Davies R.M."/>
            <person name="Feltwell T."/>
            <person name="Holroyd S."/>
            <person name="Jagels K."/>
            <person name="Karlyshev A.V."/>
            <person name="Moule S."/>
            <person name="Pallen M.J."/>
            <person name="Penn C.W."/>
            <person name="Quail M.A."/>
            <person name="Rajandream M.A."/>
            <person name="Rutherford K.M."/>
            <person name="van Vliet A.H.M."/>
            <person name="Whitehead S."/>
            <person name="Barrell B.G."/>
        </authorList>
    </citation>
    <scope>NUCLEOTIDE SEQUENCE [LARGE SCALE GENOMIC DNA]</scope>
    <source>
        <strain>ATCC 700819 / NCTC 11168</strain>
    </source>
</reference>
<reference key="2">
    <citation type="journal article" date="2013" name="Cell Commun. Signal.">
        <title>The Campylobacter jejuni CiaD effector protein activates MAP kinase signaling pathways and is required for the development of disease.</title>
        <authorList>
            <person name="Samuelson D.R."/>
            <person name="Eucker T.P."/>
            <person name="Bell J.A."/>
            <person name="Dybas L."/>
            <person name="Mansfield L.S."/>
            <person name="Konkel M.E."/>
        </authorList>
    </citation>
    <scope>FUNCTION</scope>
    <scope>SUBCELLULAR LOCATION</scope>
    <scope>DOMAIN</scope>
    <scope>DISRUPTION PHENOTYPE</scope>
    <scope>MUTAGENESIS OF THR-55 AND 135-LYS--THR-145</scope>
    <source>
        <strain>ATCC 700819 / NCTC 11168</strain>
        <strain>F38011</strain>
    </source>
</reference>
<reference key="3">
    <citation type="journal article" date="2013" name="Cell Commun. Signal.">
        <title>Serine phosphorylation of cortactin is required for maximal host cell invasion by Campylobacter jejuni.</title>
        <authorList>
            <person name="Samuelson D.R."/>
            <person name="Konkel M.E."/>
        </authorList>
    </citation>
    <scope>FUNCTION</scope>
    <scope>DISRUPTION PHENOTYPE</scope>
    <source>
        <strain>F38011</strain>
    </source>
</reference>
<reference key="4">
    <citation type="journal article" date="2021" name="Nat. Commun.">
        <title>The Campylobacter jejuni CiaD effector co-opts the host cell protein IQGAP1 to promote cell entry.</title>
        <authorList>
            <person name="Negretti N.M."/>
            <person name="Gourley C.R."/>
            <person name="Talukdar P.K."/>
            <person name="Clair G."/>
            <person name="Klappenbach C.M."/>
            <person name="Lauritsen C.J."/>
            <person name="Adkins J.N."/>
            <person name="Konkel M.E."/>
        </authorList>
    </citation>
    <scope>FUNCTION</scope>
    <scope>INTERACTION WITH HOST IQGAP1</scope>
    <scope>SUBCELLULAR LOCATION</scope>
    <scope>DOMAIN</scope>
    <source>
        <strain>81-176</strain>
        <strain>F38011</strain>
    </source>
</reference>
<dbReference type="EMBL" id="AL111168">
    <property type="protein sequence ID" value="CAL34916.1"/>
    <property type="molecule type" value="Genomic_DNA"/>
</dbReference>
<dbReference type="PIR" id="D81350">
    <property type="entry name" value="D81350"/>
</dbReference>
<dbReference type="RefSeq" id="WP_002852635.1">
    <property type="nucleotide sequence ID" value="NZ_SZUC01000001.1"/>
</dbReference>
<dbReference type="RefSeq" id="YP_002344195.1">
    <property type="nucleotide sequence ID" value="NC_002163.1"/>
</dbReference>
<dbReference type="PDB" id="8SWD">
    <property type="method" value="X-ray"/>
    <property type="resolution" value="2.45 A"/>
    <property type="chains" value="A/B/C/D=1-163"/>
</dbReference>
<dbReference type="PDB" id="8UZ8">
    <property type="method" value="X-ray"/>
    <property type="resolution" value="2.45 A"/>
    <property type="chains" value="A/B=1-163"/>
</dbReference>
<dbReference type="PDBsum" id="8SWD"/>
<dbReference type="PDBsum" id="8UZ8"/>
<dbReference type="SMR" id="Q0PAA2"/>
<dbReference type="IntAct" id="Q0PAA2">
    <property type="interactions" value="10"/>
</dbReference>
<dbReference type="STRING" id="192222.Cj0788"/>
<dbReference type="PaxDb" id="192222-Cj0788"/>
<dbReference type="DNASU" id="905093"/>
<dbReference type="EnsemblBacteria" id="CAL34916">
    <property type="protein sequence ID" value="CAL34916"/>
    <property type="gene ID" value="Cj0788"/>
</dbReference>
<dbReference type="GeneID" id="905093"/>
<dbReference type="KEGG" id="cje:Cj0788"/>
<dbReference type="PATRIC" id="fig|192222.6.peg.776"/>
<dbReference type="eggNOG" id="ENOG5031ANQ">
    <property type="taxonomic scope" value="Bacteria"/>
</dbReference>
<dbReference type="HOGENOM" id="CLU_153717_0_0_7"/>
<dbReference type="OrthoDB" id="5329345at2"/>
<dbReference type="PHI-base" id="PHI:3906"/>
<dbReference type="Proteomes" id="UP000000799">
    <property type="component" value="Chromosome"/>
</dbReference>
<dbReference type="GO" id="GO:0005576">
    <property type="term" value="C:extracellular region"/>
    <property type="evidence" value="ECO:0007669"/>
    <property type="project" value="UniProtKB-SubCell"/>
</dbReference>
<dbReference type="GO" id="GO:0044164">
    <property type="term" value="C:host cell cytosol"/>
    <property type="evidence" value="ECO:0007669"/>
    <property type="project" value="UniProtKB-SubCell"/>
</dbReference>
<dbReference type="InterPro" id="IPR054057">
    <property type="entry name" value="CiaD_C"/>
</dbReference>
<dbReference type="Pfam" id="PF21862">
    <property type="entry name" value="CiaD"/>
    <property type="match status" value="1"/>
</dbReference>
<evidence type="ECO:0000269" key="1">
    <source>
    </source>
</evidence>
<evidence type="ECO:0000269" key="2">
    <source>
    </source>
</evidence>
<evidence type="ECO:0000269" key="3">
    <source>
    </source>
</evidence>
<evidence type="ECO:0000303" key="4">
    <source>
    </source>
</evidence>
<evidence type="ECO:0000305" key="5">
    <source>
    </source>
</evidence>
<evidence type="ECO:0000312" key="6">
    <source>
        <dbReference type="EMBL" id="CAL34916.1"/>
    </source>
</evidence>
<evidence type="ECO:0007829" key="7">
    <source>
        <dbReference type="PDB" id="8SWD"/>
    </source>
</evidence>
<protein>
    <recommendedName>
        <fullName evidence="4">Campylobacter invasion antigen D</fullName>
    </recommendedName>
    <alternativeName>
        <fullName evidence="4">CiaD effector protein</fullName>
    </alternativeName>
    <alternativeName>
        <fullName evidence="4">Virulence protein CiaD</fullName>
    </alternativeName>
</protein>
<feature type="chain" id="PRO_0000458987" description="Campylobacter invasion antigen D">
    <location>
        <begin position="1"/>
        <end position="163"/>
    </location>
</feature>
<feature type="short sequence motif" description="MKD" evidence="5">
    <location>
        <begin position="135"/>
        <end position="145"/>
    </location>
</feature>
<feature type="mutagenesis site" description="Does not affect induction of secretion of IL-8 and ability to invade host cells." evidence="1">
    <original>T</original>
    <variation>A</variation>
    <location>
        <position position="55"/>
    </location>
</feature>
<feature type="mutagenesis site" description="Mutant is unable to induce secretion of IL-8 and is impaired in its ability to invade host cells." evidence="1">
    <original>KKDDLENRLNL</original>
    <variation>LQ</variation>
    <location>
        <begin position="135"/>
        <end position="145"/>
    </location>
</feature>
<feature type="helix" evidence="7">
    <location>
        <begin position="111"/>
        <end position="162"/>
    </location>
</feature>